<organism>
    <name type="scientific">Margaritifera margaritifera</name>
    <name type="common">Freshwater pearl mussel</name>
    <dbReference type="NCBI Taxonomy" id="102329"/>
    <lineage>
        <taxon>Eukaryota</taxon>
        <taxon>Metazoa</taxon>
        <taxon>Spiralia</taxon>
        <taxon>Lophotrochozoa</taxon>
        <taxon>Mollusca</taxon>
        <taxon>Bivalvia</taxon>
        <taxon>Autobranchia</taxon>
        <taxon>Pteriomorphia</taxon>
        <taxon>Pterioida</taxon>
        <taxon>Pterioidea</taxon>
        <taxon>Pteriidae</taxon>
        <taxon>Pinctada</taxon>
    </lineage>
</organism>
<keyword id="KW-0903">Direct protein sequencing</keyword>
<keyword id="KW-0677">Repeat</keyword>
<keyword id="KW-0964">Secreted</keyword>
<keyword id="KW-0732">Signal</keyword>
<accession>H2A0L7</accession>
<feature type="signal peptide" evidence="1">
    <location>
        <begin position="1"/>
        <end position="19"/>
    </location>
</feature>
<feature type="chain" id="PRO_0000417948" description="Fibronectin type III domain-containing protein 1" evidence="1">
    <location>
        <begin position="20"/>
        <end position="754"/>
    </location>
</feature>
<feature type="domain" description="Fibronectin type-III 1" evidence="2">
    <location>
        <begin position="250"/>
        <end position="355"/>
    </location>
</feature>
<feature type="domain" description="Fibronectin type-III 2" evidence="2">
    <location>
        <begin position="359"/>
        <end position="449"/>
    </location>
</feature>
<feature type="domain" description="Fibronectin type-III 3" evidence="2">
    <location>
        <begin position="453"/>
        <end position="545"/>
    </location>
</feature>
<feature type="domain" description="Fibronectin type-III 4" evidence="2">
    <location>
        <begin position="549"/>
        <end position="642"/>
    </location>
</feature>
<feature type="domain" description="Fibronectin type-III 5" evidence="2">
    <location>
        <begin position="645"/>
        <end position="742"/>
    </location>
</feature>
<feature type="region of interest" description="Disordered" evidence="3">
    <location>
        <begin position="40"/>
        <end position="61"/>
    </location>
</feature>
<feature type="region of interest" description="Disordered" evidence="3">
    <location>
        <begin position="85"/>
        <end position="106"/>
    </location>
</feature>
<feature type="region of interest" description="Disordered" evidence="3">
    <location>
        <begin position="130"/>
        <end position="163"/>
    </location>
</feature>
<feature type="region of interest" description="Disordered" evidence="3">
    <location>
        <begin position="731"/>
        <end position="754"/>
    </location>
</feature>
<feature type="compositionally biased region" description="Low complexity" evidence="3">
    <location>
        <begin position="130"/>
        <end position="161"/>
    </location>
</feature>
<comment type="subcellular location">
    <subcellularLocation>
        <location evidence="4">Secreted</location>
    </subcellularLocation>
</comment>
<comment type="tissue specificity">
    <text evidence="4">Prismatic layer of shell (at protein level). Expressed primarily in the mantle with highest level in the outer epithelium of the mantle edge and lower level in the mantle pallium.</text>
</comment>
<name>FND1_PINMG</name>
<protein>
    <recommendedName>
        <fullName>Fibronectin type III domain-containing protein 1</fullName>
    </recommendedName>
</protein>
<dbReference type="EMBL" id="HE610384">
    <property type="protein sequence ID" value="CCE46158.1"/>
    <property type="molecule type" value="mRNA"/>
</dbReference>
<dbReference type="SMR" id="H2A0L7"/>
<dbReference type="GO" id="GO:0005576">
    <property type="term" value="C:extracellular region"/>
    <property type="evidence" value="ECO:0007669"/>
    <property type="project" value="UniProtKB-SubCell"/>
</dbReference>
<dbReference type="CDD" id="cd00063">
    <property type="entry name" value="FN3"/>
    <property type="match status" value="5"/>
</dbReference>
<dbReference type="Gene3D" id="2.60.40.10">
    <property type="entry name" value="Immunoglobulins"/>
    <property type="match status" value="4"/>
</dbReference>
<dbReference type="InterPro" id="IPR050991">
    <property type="entry name" value="ECM_Regulatory_Proteins"/>
</dbReference>
<dbReference type="InterPro" id="IPR003961">
    <property type="entry name" value="FN3_dom"/>
</dbReference>
<dbReference type="InterPro" id="IPR036116">
    <property type="entry name" value="FN3_sf"/>
</dbReference>
<dbReference type="InterPro" id="IPR013783">
    <property type="entry name" value="Ig-like_fold"/>
</dbReference>
<dbReference type="PANTHER" id="PTHR46708:SF2">
    <property type="entry name" value="FIBRONECTIN TYPE-III DOMAIN-CONTAINING PROTEIN"/>
    <property type="match status" value="1"/>
</dbReference>
<dbReference type="PANTHER" id="PTHR46708">
    <property type="entry name" value="TENASCIN"/>
    <property type="match status" value="1"/>
</dbReference>
<dbReference type="Pfam" id="PF00041">
    <property type="entry name" value="fn3"/>
    <property type="match status" value="3"/>
</dbReference>
<dbReference type="PRINTS" id="PR00014">
    <property type="entry name" value="FNTYPEIII"/>
</dbReference>
<dbReference type="SMART" id="SM00060">
    <property type="entry name" value="FN3"/>
    <property type="match status" value="4"/>
</dbReference>
<dbReference type="SUPFAM" id="SSF49265">
    <property type="entry name" value="Fibronectin type III"/>
    <property type="match status" value="2"/>
</dbReference>
<dbReference type="PROSITE" id="PS50853">
    <property type="entry name" value="FN3"/>
    <property type="match status" value="5"/>
</dbReference>
<proteinExistence type="evidence at protein level"/>
<sequence>MKSWISISFLCMLFPLSNGQLGSSGQVTLQGAQISQATQSLQGTAPTSQYPQGGTQISQGGAQATQNYQGVAQGTQISQGLTQGAQISQGGGQGISQGATQGTQFSQGTVPSGQFFQNIVQGTQAVLSGAQHSQAGAQGSQFPQSAAHTAQHHQGTAQPAQSGTHAILKEMEKSLAEFKAYVEYLENMVYKERMKYPSPYIQNFTASPSNFTYTTFENDVDMRLSSMERISSELVKQMVNCPRGPVPPPPPQSVMVQSDTVDNSSNIYVSWDPPYFEGKPLTGENMHYKVYFSPSDQYGKATGGEFIFRICDANFTQASVTDLNPRSFYSIQVAATLCEAIESEGTSTSVKTPDLIPSAPLNLKLEGTKPNAFAVSWDPPTVKGTLTNYTIYATEESGKATMVTIDPKLTSYALYNLYEGTMYTIRIAASSDNGMSPKSEPLEVTTDKFIPMAPRNVRAIDNNLTSVTLEWDAPLPGRGMIRGYRINYTLDFTDYEEMLISDPSITTATITNLTPATEYYFQVFARTMKRLGYGSHLIMNKTKMDVPSEPMSVVHRIMDNGLQRIQVSWQPPENTYGPIIDYIIHWGVRGGATRKEFLTPYVLSWTSDFLDDNANHDFKLFAQNVVGIGKPVAFSVKTLPKPQILVPNVRVKRETSKNNITSLTVTWGSPKVPVDGFFVLYRKYEGVYSDRWKFIEIPKPNARGTTITVTQENVPYVVVCKGFKRQKKPTSNLSSQQFSFPGQQVGQQQSNPWI</sequence>
<reference evidence="5" key="1">
    <citation type="journal article" date="2010" name="BMC Genomics">
        <title>Transcriptome and proteome analysis of Pinctada margaritifera calcifying mantle and shell: focus on biomineralization.</title>
        <authorList>
            <person name="Joubert C."/>
            <person name="Piquemal D."/>
            <person name="Marie B."/>
            <person name="Manchon L."/>
            <person name="Pierrat F."/>
            <person name="Zanella-Cleon I."/>
            <person name="Cochennec-Laureau N."/>
            <person name="Gueguen Y."/>
            <person name="Montagnani C."/>
        </authorList>
    </citation>
    <scope>NUCLEOTIDE SEQUENCE [MRNA]</scope>
    <scope>IDENTIFICATION</scope>
    <source>
        <tissue>Mantle</tissue>
    </source>
</reference>
<reference key="2">
    <citation type="journal article" date="2012" name="Proc. Natl. Acad. Sci. U.S.A.">
        <title>Different secretory repertoires control the biomineralization processes of prism and nacre deposition of the pearl oyster shell.</title>
        <authorList>
            <person name="Marie B."/>
            <person name="Joubert C."/>
            <person name="Tayale A."/>
            <person name="Zanella-Cleon I."/>
            <person name="Belliard C."/>
            <person name="Piquemal D."/>
            <person name="Cochennec-Laureau N."/>
            <person name="Marin F."/>
            <person name="Gueguen Y."/>
            <person name="Montagnani C."/>
        </authorList>
    </citation>
    <scope>PROTEIN SEQUENCE OF 237-243; 290-309; 352-364; 400-408; 427-448; 557-564; 672-682 AND 684-691</scope>
    <scope>SUBCELLULAR LOCATION</scope>
    <scope>TISSUE SPECIFICITY</scope>
    <source>
        <tissue>Shell</tissue>
    </source>
</reference>
<evidence type="ECO:0000255" key="1"/>
<evidence type="ECO:0000255" key="2">
    <source>
        <dbReference type="PROSITE-ProRule" id="PRU00316"/>
    </source>
</evidence>
<evidence type="ECO:0000256" key="3">
    <source>
        <dbReference type="SAM" id="MobiDB-lite"/>
    </source>
</evidence>
<evidence type="ECO:0000269" key="4">
    <source>
    </source>
</evidence>
<evidence type="ECO:0000305" key="5"/>